<comment type="function">
    <text evidence="1 7 8 9">Magnesium-independent phospholipid phosphatase of the plasma membrane that catalyzes the dephosphorylation of a variety of glycerolipid and sphingolipid phosphate esters including phosphatidate/PA, lysophosphatidate/LPA, diacylglycerol pyrophosphate/DGPP, sphingosine 1-phosphate/S1P and ceramide 1-phosphate/C1P (PubMed:10359651, PubMed:8663293). Also acts on N-oleoyl ethanolamine phosphate/N-(9Z-octadecenoyl)-ethanolamine phosphate, a potential physiological compound (By similarity). Through its extracellular phosphatase activity allows both the hydrolysis and the cellular uptake of these bioactive lipid mediators from the milieu, regulating signal transduction in different cellular processes (PubMed:10359651). It is for instance essential for the extracellular hydrolysis of S1P and subsequent conversion into intracellular S1P (By similarity). Involved in the regulation of inflammation, platelets activation, cell proliferation and migration among other processes (By similarity). May also have an intracellular activity to regulate phospholipid-mediated signaling pathways (PubMed:17057224).</text>
</comment>
<comment type="catalytic activity">
    <reaction evidence="7 9">
        <text>a 1,2-diacyl-sn-glycero-3-phosphate + H2O = a 1,2-diacyl-sn-glycerol + phosphate</text>
        <dbReference type="Rhea" id="RHEA:27429"/>
        <dbReference type="ChEBI" id="CHEBI:15377"/>
        <dbReference type="ChEBI" id="CHEBI:17815"/>
        <dbReference type="ChEBI" id="CHEBI:43474"/>
        <dbReference type="ChEBI" id="CHEBI:58608"/>
        <dbReference type="EC" id="3.1.3.4"/>
    </reaction>
    <physiologicalReaction direction="left-to-right" evidence="12">
        <dbReference type="Rhea" id="RHEA:27430"/>
    </physiologicalReaction>
</comment>
<comment type="catalytic activity">
    <reaction evidence="1">
        <text>1,2-dihexadecanoyl-sn-glycero-3-phosphate + H2O = 1,2-dihexadecanoyl-sn-glycerol + phosphate</text>
        <dbReference type="Rhea" id="RHEA:43236"/>
        <dbReference type="ChEBI" id="CHEBI:15377"/>
        <dbReference type="ChEBI" id="CHEBI:43474"/>
        <dbReference type="ChEBI" id="CHEBI:72859"/>
        <dbReference type="ChEBI" id="CHEBI:82929"/>
    </reaction>
    <physiologicalReaction direction="left-to-right" evidence="1">
        <dbReference type="Rhea" id="RHEA:43237"/>
    </physiologicalReaction>
</comment>
<comment type="catalytic activity">
    <reaction evidence="9">
        <text>1,2-di-(9Z-octadecenoyl)-sn-glycero-3-phosphate + H2O = 1,2-di-(9Z-octadecenoyl)-sn-glycerol + phosphate</text>
        <dbReference type="Rhea" id="RHEA:43244"/>
        <dbReference type="ChEBI" id="CHEBI:15377"/>
        <dbReference type="ChEBI" id="CHEBI:43474"/>
        <dbReference type="ChEBI" id="CHEBI:52333"/>
        <dbReference type="ChEBI" id="CHEBI:74546"/>
    </reaction>
    <physiologicalReaction direction="left-to-right" evidence="13">
        <dbReference type="Rhea" id="RHEA:43245"/>
    </physiologicalReaction>
</comment>
<comment type="catalytic activity">
    <reaction evidence="7 9">
        <text>a monoacyl-sn-glycero-3-phosphate + H2O = a monoacylglycerol + phosphate</text>
        <dbReference type="Rhea" id="RHEA:46736"/>
        <dbReference type="ChEBI" id="CHEBI:15377"/>
        <dbReference type="ChEBI" id="CHEBI:17408"/>
        <dbReference type="ChEBI" id="CHEBI:43474"/>
        <dbReference type="ChEBI" id="CHEBI:77589"/>
    </reaction>
    <physiologicalReaction direction="left-to-right" evidence="7">
        <dbReference type="Rhea" id="RHEA:46737"/>
    </physiologicalReaction>
</comment>
<comment type="catalytic activity">
    <reaction evidence="9">
        <text>(9Z)-octadecenoyl-sn-glycero-3-phosphate + H2O = (9Z-octadecenoyl)-glycerol + phosphate</text>
        <dbReference type="Rhea" id="RHEA:50884"/>
        <dbReference type="ChEBI" id="CHEBI:15377"/>
        <dbReference type="ChEBI" id="CHEBI:43474"/>
        <dbReference type="ChEBI" id="CHEBI:75937"/>
        <dbReference type="ChEBI" id="CHEBI:84973"/>
    </reaction>
    <physiologicalReaction direction="left-to-right" evidence="13">
        <dbReference type="Rhea" id="RHEA:50885"/>
    </physiologicalReaction>
</comment>
<comment type="catalytic activity">
    <reaction evidence="9">
        <text>a 1-acyl-sn-glycero-3-phosphate + H2O = a 1-acyl-sn-glycerol + phosphate</text>
        <dbReference type="Rhea" id="RHEA:33155"/>
        <dbReference type="ChEBI" id="CHEBI:15377"/>
        <dbReference type="ChEBI" id="CHEBI:43474"/>
        <dbReference type="ChEBI" id="CHEBI:57970"/>
        <dbReference type="ChEBI" id="CHEBI:64683"/>
        <dbReference type="EC" id="3.1.3.106"/>
    </reaction>
    <physiologicalReaction direction="left-to-right" evidence="13">
        <dbReference type="Rhea" id="RHEA:33156"/>
    </physiologicalReaction>
</comment>
<comment type="catalytic activity">
    <reaction evidence="4">
        <text>1-(9Z-octadecenoyl)-sn-glycero-3-phosphate + H2O = 1-(9Z-octadecenoyl)-sn-glycerol + phosphate</text>
        <dbReference type="Rhea" id="RHEA:39835"/>
        <dbReference type="ChEBI" id="CHEBI:15377"/>
        <dbReference type="ChEBI" id="CHEBI:43474"/>
        <dbReference type="ChEBI" id="CHEBI:74544"/>
        <dbReference type="ChEBI" id="CHEBI:75757"/>
    </reaction>
    <physiologicalReaction direction="left-to-right" evidence="4">
        <dbReference type="Rhea" id="RHEA:39836"/>
    </physiologicalReaction>
</comment>
<comment type="catalytic activity">
    <reaction evidence="7">
        <text>a 1,2-diacyl-sn-glycerol 3-diphosphate + H2O = a 1,2-diacyl-sn-glycero-3-phosphate + phosphate + H(+)</text>
        <dbReference type="Rhea" id="RHEA:27449"/>
        <dbReference type="ChEBI" id="CHEBI:15377"/>
        <dbReference type="ChEBI" id="CHEBI:15378"/>
        <dbReference type="ChEBI" id="CHEBI:43474"/>
        <dbReference type="ChEBI" id="CHEBI:58608"/>
        <dbReference type="ChEBI" id="CHEBI:59996"/>
        <dbReference type="EC" id="3.6.1.75"/>
    </reaction>
    <physiologicalReaction direction="left-to-right" evidence="12">
        <dbReference type="Rhea" id="RHEA:27450"/>
    </physiologicalReaction>
</comment>
<comment type="catalytic activity">
    <reaction evidence="7 9">
        <text>sphing-4-enine 1-phosphate + H2O = sphing-4-enine + phosphate</text>
        <dbReference type="Rhea" id="RHEA:27518"/>
        <dbReference type="ChEBI" id="CHEBI:15377"/>
        <dbReference type="ChEBI" id="CHEBI:43474"/>
        <dbReference type="ChEBI" id="CHEBI:57756"/>
        <dbReference type="ChEBI" id="CHEBI:60119"/>
    </reaction>
    <physiologicalReaction direction="left-to-right" evidence="12">
        <dbReference type="Rhea" id="RHEA:27519"/>
    </physiologicalReaction>
</comment>
<comment type="catalytic activity">
    <reaction evidence="7 9">
        <text>an N-acylsphing-4-enine 1-phosphate + H2O = an N-acylsphing-4-enine + phosphate</text>
        <dbReference type="Rhea" id="RHEA:33743"/>
        <dbReference type="ChEBI" id="CHEBI:15377"/>
        <dbReference type="ChEBI" id="CHEBI:43474"/>
        <dbReference type="ChEBI" id="CHEBI:52639"/>
        <dbReference type="ChEBI" id="CHEBI:57674"/>
    </reaction>
    <physiologicalReaction direction="left-to-right" evidence="12">
        <dbReference type="Rhea" id="RHEA:33744"/>
    </physiologicalReaction>
</comment>
<comment type="catalytic activity">
    <reaction evidence="1">
        <text>N-(octanoyl)-sphing-4-enine-1-phosphate + H2O = N-octanoylsphing-4-enine + phosphate</text>
        <dbReference type="Rhea" id="RHEA:62040"/>
        <dbReference type="ChEBI" id="CHEBI:15377"/>
        <dbReference type="ChEBI" id="CHEBI:43474"/>
        <dbReference type="ChEBI" id="CHEBI:45815"/>
        <dbReference type="ChEBI" id="CHEBI:85376"/>
    </reaction>
    <physiologicalReaction direction="left-to-right" evidence="1">
        <dbReference type="Rhea" id="RHEA:62041"/>
    </physiologicalReaction>
</comment>
<comment type="catalytic activity">
    <reaction evidence="1">
        <text>N-(9Z-octadecenoyl)-ethanolamine phosphate + H2O = N-(9Z-octadecenoyl) ethanolamine + phosphate</text>
        <dbReference type="Rhea" id="RHEA:62160"/>
        <dbReference type="ChEBI" id="CHEBI:15377"/>
        <dbReference type="ChEBI" id="CHEBI:43474"/>
        <dbReference type="ChEBI" id="CHEBI:71466"/>
        <dbReference type="ChEBI" id="CHEBI:145465"/>
    </reaction>
    <physiologicalReaction direction="left-to-right" evidence="1">
        <dbReference type="Rhea" id="RHEA:62161"/>
    </physiologicalReaction>
</comment>
<comment type="catalytic activity">
    <reaction evidence="7">
        <text>1-hexadecanoyl-2-(9Z-octadecenoyl)-sn-glycero-3-phosphate + H2O = 1-hexadecanoyl-2-(9Z-octadecenoyl)-sn-glycerol + phosphate</text>
        <dbReference type="Rhea" id="RHEA:41255"/>
        <dbReference type="ChEBI" id="CHEBI:15377"/>
        <dbReference type="ChEBI" id="CHEBI:43474"/>
        <dbReference type="ChEBI" id="CHEBI:64839"/>
        <dbReference type="ChEBI" id="CHEBI:75466"/>
    </reaction>
    <physiologicalReaction direction="left-to-right" evidence="12">
        <dbReference type="Rhea" id="RHEA:41256"/>
    </physiologicalReaction>
</comment>
<comment type="activity regulation">
    <text evidence="7 9">Magnesium-independent phospholipid phosphatase (PubMed:10359651, PubMed:8663293). Insensitive to N-ethylmaleimide (PubMed:10359651).</text>
</comment>
<comment type="biophysicochemical properties">
    <kinetics>
        <KM evidence="9">3.5 uM for 1,2-di-(9Z-octadecenoyl)-sn-glycero-3-phosphate (at pH 6.5 and 37 degrees Celsius)</KM>
        <KM evidence="9">0.4 uM for (9Z)-octadecenoyl-sn-glycero-3-phosphate (at pH 6.5 and 37 degrees Celsius)</KM>
        <KM evidence="9">1.9 uM for N-acylsphing-4-enine 1-phosphate (at pH 6.5 and 37 degrees Celsius)</KM>
        <KM evidence="9">4 uM for sphing-4-enine 1-phosphate (at pH 6.5 and 37 degrees Celsius)</KM>
        <Vmax evidence="9">0.55 umol/min/mg enzyme with 1,2-di-(9Z-octadecenoyl)-sn-glycero-3-phosphate as substrate</Vmax>
        <Vmax evidence="9">0.19 umol/min/mg enzyme with (9Z)-octadecenoyl-sn-glycero-3-phosphate as substrate</Vmax>
        <Vmax evidence="9">0.26 umol/min/mg enzyme with N-acylsphing-4-enine 1-phosphate as substrate</Vmax>
        <Vmax evidence="9">0.15 umol/min/mg enzyme with sphing-4-enine 1-phosphate as substrate</Vmax>
    </kinetics>
</comment>
<comment type="pathway">
    <text evidence="7 9">Lipid metabolism; phospholipid metabolism.</text>
</comment>
<comment type="subunit">
    <text evidence="3 4">Forms functional homodimers and homooligomers that are not required for substrate recognition and catalytic activity (By similarity). Can also form heterooligomers with PLPP2 and PLPP3 (By similarity).</text>
</comment>
<comment type="subcellular location">
    <subcellularLocation>
        <location evidence="9">Cell membrane</location>
        <topology evidence="5">Multi-pass membrane protein</topology>
    </subcellularLocation>
    <subcellularLocation>
        <location evidence="1">Apical cell membrane</location>
        <topology evidence="5">Multi-pass membrane protein</topology>
    </subcellularLocation>
    <subcellularLocation>
        <location evidence="1">Membrane raft</location>
        <topology evidence="5">Multi-pass membrane protein</topology>
    </subcellularLocation>
    <subcellularLocation>
        <location evidence="4">Membrane</location>
        <location evidence="4">Caveola</location>
        <topology evidence="5">Multi-pass membrane protein</topology>
    </subcellularLocation>
</comment>
<comment type="alternative products">
    <event type="alternative splicing"/>
    <isoform>
        <id>O08564-1</id>
        <name>1</name>
        <sequence type="displayed"/>
    </isoform>
    <isoform>
        <id>O08564-2</id>
        <name>2</name>
        <name>LPP1a</name>
        <sequence type="described" ref="VSP_009653"/>
    </isoform>
    <text>Additional isoforms seem to exist.</text>
</comment>
<comment type="PTM">
    <text evidence="4">N-glycosylated. N-linked sugars are of the complex type. N-glycosylation is not required for the phosphatase activity.</text>
</comment>
<comment type="similarity">
    <text evidence="11">Belongs to the PA-phosphatase related phosphoesterase family.</text>
</comment>
<reference key="1">
    <citation type="journal article" date="1999" name="Biochem. J.">
        <title>Lipid phosphate phosphohydrolase-1 degrades exogenous glycerolipid and sphingolipid phosphate esters.</title>
        <authorList>
            <person name="Jasinska R."/>
            <person name="Zhang Q.-X."/>
            <person name="Pilquil C."/>
            <person name="Singh I."/>
            <person name="Xu J."/>
            <person name="Dewald J."/>
            <person name="Dillon D.A."/>
            <person name="Berthiaume L.G."/>
            <person name="Carman G.M."/>
            <person name="Waggoner D.W."/>
            <person name="Brindley D.N."/>
        </authorList>
    </citation>
    <scope>NUCLEOTIDE SEQUENCE [MRNA] (ISOFORM 1)</scope>
    <scope>FUNCTION</scope>
    <scope>CATALYTIC ACTIVITY</scope>
    <scope>SUBSTRATE SPECIFICITY</scope>
    <scope>ACTIVITY REGULATION</scope>
    <scope>PATHWAY</scope>
    <source>
        <tissue>Liver</tissue>
    </source>
</reference>
<reference key="2">
    <citation type="journal article" date="2001" name="Am. J. Physiol.">
        <title>Molecular cloning and expression of pulmonary lipid phosphate phosphohydrolases.</title>
        <authorList>
            <person name="Nanjundan M."/>
            <person name="Possmayer F."/>
        </authorList>
    </citation>
    <scope>NUCLEOTIDE SEQUENCE [MRNA] (ISOFORMS 1 AND 2)</scope>
    <source>
        <strain>Sprague-Dawley</strain>
        <tissue>Lung</tissue>
    </source>
</reference>
<reference key="3">
    <citation type="journal article" date="1996" name="J. Biol. Chem.">
        <title>Phosphatidate phosphohydrolase catalyzes the hydrolysis of ceramide 1-phosphate, lysophosphatidate, and sphingosine 1-phosphate.</title>
        <authorList>
            <person name="Waggoner D.W."/>
            <person name="Gomez-Munoz A."/>
            <person name="Dewald J."/>
            <person name="Brindley D.N."/>
        </authorList>
    </citation>
    <scope>FUNCTION</scope>
    <scope>CATALYTIC ACTIVITY</scope>
    <scope>SUBSTRATE SPECIFICITY</scope>
    <scope>ACTIVITY REGULATION</scope>
    <scope>BIOPHYSICOCHEMICAL PROPERTIES</scope>
    <scope>PATHWAY</scope>
    <scope>SUBCELLULAR LOCATION</scope>
</reference>
<reference key="4">
    <citation type="journal article" date="2006" name="J. Biol. Chem.">
        <title>Lipid phosphate phosphatase-1 regulates lysophosphatidate-induced fibroblast migration by controlling phospholipase D2-dependent phosphatidate generation.</title>
        <authorList>
            <person name="Pilquil C."/>
            <person name="Dewald J."/>
            <person name="Cherney A."/>
            <person name="Gorshkova I."/>
            <person name="Tigyi G."/>
            <person name="English D."/>
            <person name="Natarajan V."/>
            <person name="Brindley D.N."/>
        </authorList>
    </citation>
    <scope>FUNCTION</scope>
</reference>
<protein>
    <recommendedName>
        <fullName evidence="11">Phospholipid phosphatase 1</fullName>
        <ecNumber evidence="7 9">3.1.3.-</ecNumber>
        <ecNumber evidence="4">3.1.3.106</ecNumber>
        <ecNumber evidence="7 9">3.1.3.4</ecNumber>
        <ecNumber evidence="7">3.6.1.75</ecNumber>
    </recommendedName>
    <alternativeName>
        <fullName>Lipid phosphate phosphohydrolase 1</fullName>
    </alternativeName>
    <alternativeName>
        <fullName>PAP2-alpha</fullName>
    </alternativeName>
    <alternativeName>
        <fullName>Phosphatidate phosphohydrolase type 2a</fullName>
    </alternativeName>
    <alternativeName>
        <fullName>Phosphatidic acid phosphatase 2a</fullName>
        <shortName>PAP-2a</shortName>
        <shortName>PAP2a</shortName>
    </alternativeName>
</protein>
<evidence type="ECO:0000250" key="1">
    <source>
        <dbReference type="UniProtKB" id="O14494"/>
    </source>
</evidence>
<evidence type="ECO:0000250" key="2">
    <source>
        <dbReference type="UniProtKB" id="O34349"/>
    </source>
</evidence>
<evidence type="ECO:0000250" key="3">
    <source>
        <dbReference type="UniProtKB" id="O88956"/>
    </source>
</evidence>
<evidence type="ECO:0000250" key="4">
    <source>
        <dbReference type="UniProtKB" id="Q61469"/>
    </source>
</evidence>
<evidence type="ECO:0000255" key="5"/>
<evidence type="ECO:0000256" key="6">
    <source>
        <dbReference type="SAM" id="MobiDB-lite"/>
    </source>
</evidence>
<evidence type="ECO:0000269" key="7">
    <source>
    </source>
</evidence>
<evidence type="ECO:0000269" key="8">
    <source>
    </source>
</evidence>
<evidence type="ECO:0000269" key="9">
    <source>
    </source>
</evidence>
<evidence type="ECO:0000303" key="10">
    <source>
    </source>
</evidence>
<evidence type="ECO:0000305" key="11"/>
<evidence type="ECO:0000305" key="12">
    <source>
    </source>
</evidence>
<evidence type="ECO:0000305" key="13">
    <source>
    </source>
</evidence>
<evidence type="ECO:0000312" key="14">
    <source>
        <dbReference type="RGD" id="621832"/>
    </source>
</evidence>
<proteinExistence type="evidence at protein level"/>
<organism>
    <name type="scientific">Rattus norvegicus</name>
    <name type="common">Rat</name>
    <dbReference type="NCBI Taxonomy" id="10116"/>
    <lineage>
        <taxon>Eukaryota</taxon>
        <taxon>Metazoa</taxon>
        <taxon>Chordata</taxon>
        <taxon>Craniata</taxon>
        <taxon>Vertebrata</taxon>
        <taxon>Euteleostomi</taxon>
        <taxon>Mammalia</taxon>
        <taxon>Eutheria</taxon>
        <taxon>Euarchontoglires</taxon>
        <taxon>Glires</taxon>
        <taxon>Rodentia</taxon>
        <taxon>Myomorpha</taxon>
        <taxon>Muroidea</taxon>
        <taxon>Muridae</taxon>
        <taxon>Murinae</taxon>
        <taxon>Rattus</taxon>
    </lineage>
</organism>
<accession>O08564</accession>
<accession>Q8K594</accession>
<feature type="chain" id="PRO_0000220908" description="Phospholipid phosphatase 1">
    <location>
        <begin position="1"/>
        <end position="282"/>
    </location>
</feature>
<feature type="topological domain" description="Cytoplasmic" evidence="4">
    <location>
        <begin position="1"/>
        <end position="6"/>
    </location>
</feature>
<feature type="transmembrane region" description="Helical" evidence="5">
    <location>
        <begin position="7"/>
        <end position="27"/>
    </location>
</feature>
<feature type="topological domain" description="Extracellular" evidence="4">
    <location>
        <begin position="28"/>
        <end position="53"/>
    </location>
</feature>
<feature type="transmembrane region" description="Helical" evidence="5">
    <location>
        <begin position="54"/>
        <end position="74"/>
    </location>
</feature>
<feature type="topological domain" description="Cytoplasmic" evidence="4">
    <location>
        <begin position="75"/>
        <end position="88"/>
    </location>
</feature>
<feature type="transmembrane region" description="Helical" evidence="5">
    <location>
        <begin position="89"/>
        <end position="109"/>
    </location>
</feature>
<feature type="topological domain" description="Extracellular" evidence="4">
    <location>
        <begin position="110"/>
        <end position="164"/>
    </location>
</feature>
<feature type="transmembrane region" description="Helical" evidence="5">
    <location>
        <begin position="165"/>
        <end position="185"/>
    </location>
</feature>
<feature type="topological domain" description="Cytoplasmic" evidence="4">
    <location>
        <begin position="186"/>
        <end position="194"/>
    </location>
</feature>
<feature type="transmembrane region" description="Helical" evidence="5">
    <location>
        <begin position="195"/>
        <end position="215"/>
    </location>
</feature>
<feature type="topological domain" description="Extracellular" evidence="4">
    <location>
        <begin position="216"/>
        <end position="229"/>
    </location>
</feature>
<feature type="transmembrane region" description="Helical" evidence="5">
    <location>
        <begin position="230"/>
        <end position="250"/>
    </location>
</feature>
<feature type="topological domain" description="Cytoplasmic" evidence="4">
    <location>
        <begin position="251"/>
        <end position="282"/>
    </location>
</feature>
<feature type="region of interest" description="Phosphatase sequence motif I" evidence="2">
    <location>
        <begin position="120"/>
        <end position="128"/>
    </location>
</feature>
<feature type="region of interest" description="Phosphatase sequence motif II" evidence="2">
    <location>
        <begin position="168"/>
        <end position="171"/>
    </location>
</feature>
<feature type="region of interest" description="Phosphatase sequence motif III" evidence="2">
    <location>
        <begin position="216"/>
        <end position="227"/>
    </location>
</feature>
<feature type="region of interest" description="Disordered" evidence="6">
    <location>
        <begin position="257"/>
        <end position="282"/>
    </location>
</feature>
<feature type="short sequence motif" description="PDZ-binding; involved in localization to the apical cell membrane" evidence="1">
    <location>
        <begin position="5"/>
        <end position="7"/>
    </location>
</feature>
<feature type="compositionally biased region" description="Basic and acidic residues" evidence="6">
    <location>
        <begin position="257"/>
        <end position="271"/>
    </location>
</feature>
<feature type="compositionally biased region" description="Polar residues" evidence="6">
    <location>
        <begin position="272"/>
        <end position="282"/>
    </location>
</feature>
<feature type="active site" description="Proton donors" evidence="2">
    <location>
        <position position="171"/>
    </location>
</feature>
<feature type="active site" description="Nucleophile" evidence="2">
    <location>
        <position position="223"/>
    </location>
</feature>
<feature type="site" description="Stabilizes the active site histidine for nucleophilic attack" evidence="2">
    <location>
        <position position="227"/>
    </location>
</feature>
<feature type="glycosylation site" description="N-linked (GlcNAc...) asparagine" evidence="5">
    <location>
        <position position="142"/>
    </location>
</feature>
<feature type="splice variant" id="VSP_009653" description="In isoform 2." evidence="10">
    <original>GLPFIILTSRHTPFQRGVFCTDESIKYPYREDTIPYALLGGIVIPFCIIV</original>
    <variation>SMPMAVVNLGQIYPFQRGFFCSDNSVKYPYHDSTVTTSVLVLVGLGIPIFS</variation>
    <location>
        <begin position="21"/>
        <end position="70"/>
    </location>
</feature>
<dbReference type="EC" id="3.1.3.-" evidence="7 9"/>
<dbReference type="EC" id="3.1.3.106" evidence="4"/>
<dbReference type="EC" id="3.1.3.4" evidence="7 9"/>
<dbReference type="EC" id="3.6.1.75" evidence="7"/>
<dbReference type="EMBL" id="U90556">
    <property type="protein sequence ID" value="AAB50246.1"/>
    <property type="molecule type" value="mRNA"/>
</dbReference>
<dbReference type="EMBL" id="AF503609">
    <property type="protein sequence ID" value="AAM28631.1"/>
    <property type="molecule type" value="mRNA"/>
</dbReference>
<dbReference type="FunCoup" id="O08564">
    <property type="interactions" value="365"/>
</dbReference>
<dbReference type="STRING" id="10116.ENSRNOP00000062843"/>
<dbReference type="SwissLipids" id="SLP:000000610"/>
<dbReference type="GlyCosmos" id="O08564">
    <property type="glycosylation" value="1 site, No reported glycans"/>
</dbReference>
<dbReference type="GlyGen" id="O08564">
    <property type="glycosylation" value="1 site"/>
</dbReference>
<dbReference type="iPTMnet" id="O08564"/>
<dbReference type="PhosphoSitePlus" id="O08564"/>
<dbReference type="PaxDb" id="10116-ENSRNOP00000062843"/>
<dbReference type="AGR" id="RGD:621832"/>
<dbReference type="RGD" id="621832">
    <property type="gene designation" value="Plpp1"/>
</dbReference>
<dbReference type="eggNOG" id="KOG3030">
    <property type="taxonomic scope" value="Eukaryota"/>
</dbReference>
<dbReference type="InParanoid" id="O08564"/>
<dbReference type="PhylomeDB" id="O08564"/>
<dbReference type="Reactome" id="R-RNO-9845614">
    <property type="pathway name" value="Sphingolipid catabolism"/>
</dbReference>
<dbReference type="UniPathway" id="UPA00085"/>
<dbReference type="PRO" id="PR:O08564"/>
<dbReference type="Proteomes" id="UP000002494">
    <property type="component" value="Unplaced"/>
</dbReference>
<dbReference type="GO" id="GO:0016324">
    <property type="term" value="C:apical plasma membrane"/>
    <property type="evidence" value="ECO:0000250"/>
    <property type="project" value="UniProtKB"/>
</dbReference>
<dbReference type="GO" id="GO:0005901">
    <property type="term" value="C:caveola"/>
    <property type="evidence" value="ECO:0000250"/>
    <property type="project" value="UniProtKB"/>
</dbReference>
<dbReference type="GO" id="GO:0016020">
    <property type="term" value="C:membrane"/>
    <property type="evidence" value="ECO:0000250"/>
    <property type="project" value="UniProtKB"/>
</dbReference>
<dbReference type="GO" id="GO:0045121">
    <property type="term" value="C:membrane raft"/>
    <property type="evidence" value="ECO:0000250"/>
    <property type="project" value="UniProtKB"/>
</dbReference>
<dbReference type="GO" id="GO:0005886">
    <property type="term" value="C:plasma membrane"/>
    <property type="evidence" value="ECO:0000314"/>
    <property type="project" value="UniProtKB"/>
</dbReference>
<dbReference type="GO" id="GO:0106235">
    <property type="term" value="F:ceramide-1-phosphate phosphatase activity"/>
    <property type="evidence" value="ECO:0000314"/>
    <property type="project" value="UniProtKB"/>
</dbReference>
<dbReference type="GO" id="GO:0000810">
    <property type="term" value="F:diacylglycerol diphosphate phosphatase activity"/>
    <property type="evidence" value="ECO:0000314"/>
    <property type="project" value="UniProtKB"/>
</dbReference>
<dbReference type="GO" id="GO:0042577">
    <property type="term" value="F:lipid phosphatase activity"/>
    <property type="evidence" value="ECO:0000266"/>
    <property type="project" value="RGD"/>
</dbReference>
<dbReference type="GO" id="GO:0052642">
    <property type="term" value="F:lysophosphatidic acid phosphatase activity"/>
    <property type="evidence" value="ECO:0007669"/>
    <property type="project" value="UniProtKB-EC"/>
</dbReference>
<dbReference type="GO" id="GO:0008195">
    <property type="term" value="F:phosphatidate phosphatase activity"/>
    <property type="evidence" value="ECO:0000314"/>
    <property type="project" value="UniProtKB"/>
</dbReference>
<dbReference type="GO" id="GO:0042392">
    <property type="term" value="F:sphingosine-1-phosphate phosphatase activity"/>
    <property type="evidence" value="ECO:0000314"/>
    <property type="project" value="UniProtKB"/>
</dbReference>
<dbReference type="GO" id="GO:0006672">
    <property type="term" value="P:ceramide metabolic process"/>
    <property type="evidence" value="ECO:0000314"/>
    <property type="project" value="UniProtKB"/>
</dbReference>
<dbReference type="GO" id="GO:0009395">
    <property type="term" value="P:phospholipid catabolic process"/>
    <property type="evidence" value="ECO:0000266"/>
    <property type="project" value="RGD"/>
</dbReference>
<dbReference type="GO" id="GO:0046839">
    <property type="term" value="P:phospholipid dephosphorylation"/>
    <property type="evidence" value="ECO:0000314"/>
    <property type="project" value="UniProtKB"/>
</dbReference>
<dbReference type="GO" id="GO:0006644">
    <property type="term" value="P:phospholipid metabolic process"/>
    <property type="evidence" value="ECO:0000314"/>
    <property type="project" value="UniProtKB"/>
</dbReference>
<dbReference type="GO" id="GO:0007165">
    <property type="term" value="P:signal transduction"/>
    <property type="evidence" value="ECO:0000250"/>
    <property type="project" value="UniProtKB"/>
</dbReference>
<dbReference type="GO" id="GO:0006670">
    <property type="term" value="P:sphingosine metabolic process"/>
    <property type="evidence" value="ECO:0000314"/>
    <property type="project" value="UniProtKB"/>
</dbReference>
<dbReference type="CDD" id="cd03384">
    <property type="entry name" value="PAP2_wunen"/>
    <property type="match status" value="1"/>
</dbReference>
<dbReference type="FunFam" id="1.20.144.10:FF:000007">
    <property type="entry name" value="phospholipid phosphatase 1 isoform X2"/>
    <property type="match status" value="1"/>
</dbReference>
<dbReference type="Gene3D" id="1.20.144.10">
    <property type="entry name" value="Phosphatidic acid phosphatase type 2/haloperoxidase"/>
    <property type="match status" value="1"/>
</dbReference>
<dbReference type="InterPro" id="IPR036938">
    <property type="entry name" value="P_Acid_Pase_2/haloperoxi_sf"/>
</dbReference>
<dbReference type="InterPro" id="IPR000326">
    <property type="entry name" value="P_Acid_Pase_2/haloperoxidase"/>
</dbReference>
<dbReference type="InterPro" id="IPR043216">
    <property type="entry name" value="PA_PP_rel"/>
</dbReference>
<dbReference type="PANTHER" id="PTHR10165">
    <property type="entry name" value="LIPID PHOSPHATE PHOSPHATASE"/>
    <property type="match status" value="1"/>
</dbReference>
<dbReference type="PANTHER" id="PTHR10165:SF26">
    <property type="entry name" value="PHOSPHOLIPID PHOSPHATASE 1"/>
    <property type="match status" value="1"/>
</dbReference>
<dbReference type="Pfam" id="PF01569">
    <property type="entry name" value="PAP2"/>
    <property type="match status" value="1"/>
</dbReference>
<dbReference type="SMART" id="SM00014">
    <property type="entry name" value="acidPPc"/>
    <property type="match status" value="1"/>
</dbReference>
<dbReference type="SUPFAM" id="SSF48317">
    <property type="entry name" value="Acid phosphatase/Vanadium-dependent haloperoxidase"/>
    <property type="match status" value="1"/>
</dbReference>
<sequence>MFDKPRLPYVVLDVICVLLAGLPFIILTSRHTPFQRGVFCTDESIKYPYREDTIPYALLGGIVIPFCIIVMITGETLSVYFNVLHSNSFVSNHYIATIYKAVGAFLFGASASQSLTDIAKYSIGRLRPHFLAVCNPDWSKINCSDGYIENFVCQGNEQKVREGRLSFYSGHSSFSMYCMLFVALYLQARMKGDWARLLRPMLQFGLVALSIYVGLSRVSDYKHHWSDVLIGLIQGAVVAILVVLYVTDFFKTTESNKERKEDSHTTLHETTNRQSYARNHEP</sequence>
<keyword id="KW-0025">Alternative splicing</keyword>
<keyword id="KW-1003">Cell membrane</keyword>
<keyword id="KW-0325">Glycoprotein</keyword>
<keyword id="KW-0378">Hydrolase</keyword>
<keyword id="KW-0443">Lipid metabolism</keyword>
<keyword id="KW-0472">Membrane</keyword>
<keyword id="KW-1185">Reference proteome</keyword>
<keyword id="KW-0812">Transmembrane</keyword>
<keyword id="KW-1133">Transmembrane helix</keyword>
<name>PLPP1_RAT</name>
<gene>
    <name evidence="14" type="primary">Plpp1</name>
    <name type="synonym">Lpp1</name>
    <name type="synonym">Ppap2a</name>
</gene>